<feature type="chain" id="PRO_1000044751" description="UPF0251 protein Mevan_1492">
    <location>
        <begin position="1"/>
        <end position="130"/>
    </location>
</feature>
<name>Y1492_METVS</name>
<gene>
    <name type="ordered locus">Mevan_1492</name>
</gene>
<sequence length="130" mass="14910">MQFRKGRPKILRLISEEPKFNIFKPVGIPKNELESVVLTLEELESLRLVDYVGQSHEDAADSMGISRRVFWNILKSARKKVSDALINGKMIDIGGGYYQIRKCNEQECQGMPCRFGLSNCFKNKNKDNEL</sequence>
<comment type="similarity">
    <text evidence="1">Belongs to the UPF0251 family.</text>
</comment>
<accession>A6USB4</accession>
<organism>
    <name type="scientific">Methanococcus vannielii (strain ATCC 35089 / DSM 1224 / JCM 13029 / OCM 148 / SB)</name>
    <dbReference type="NCBI Taxonomy" id="406327"/>
    <lineage>
        <taxon>Archaea</taxon>
        <taxon>Methanobacteriati</taxon>
        <taxon>Methanobacteriota</taxon>
        <taxon>Methanomada group</taxon>
        <taxon>Methanococci</taxon>
        <taxon>Methanococcales</taxon>
        <taxon>Methanococcaceae</taxon>
        <taxon>Methanococcus</taxon>
    </lineage>
</organism>
<dbReference type="EMBL" id="CP000742">
    <property type="protein sequence ID" value="ABR55386.1"/>
    <property type="molecule type" value="Genomic_DNA"/>
</dbReference>
<dbReference type="RefSeq" id="WP_012066300.1">
    <property type="nucleotide sequence ID" value="NC_009634.1"/>
</dbReference>
<dbReference type="STRING" id="406327.Mevan_1492"/>
<dbReference type="GeneID" id="5325248"/>
<dbReference type="KEGG" id="mvn:Mevan_1492"/>
<dbReference type="eggNOG" id="arCOG02238">
    <property type="taxonomic scope" value="Archaea"/>
</dbReference>
<dbReference type="HOGENOM" id="CLU_094511_0_1_2"/>
<dbReference type="OrthoDB" id="74471at2157"/>
<dbReference type="Proteomes" id="UP000001107">
    <property type="component" value="Chromosome"/>
</dbReference>
<dbReference type="HAMAP" id="MF_00674">
    <property type="entry name" value="UPF0251"/>
    <property type="match status" value="1"/>
</dbReference>
<dbReference type="InterPro" id="IPR002852">
    <property type="entry name" value="UPF0251"/>
</dbReference>
<dbReference type="PANTHER" id="PTHR37478">
    <property type="match status" value="1"/>
</dbReference>
<dbReference type="PANTHER" id="PTHR37478:SF2">
    <property type="entry name" value="UPF0251 PROTEIN TK0562"/>
    <property type="match status" value="1"/>
</dbReference>
<dbReference type="Pfam" id="PF02001">
    <property type="entry name" value="DUF134"/>
    <property type="match status" value="1"/>
</dbReference>
<protein>
    <recommendedName>
        <fullName evidence="1">UPF0251 protein Mevan_1492</fullName>
    </recommendedName>
</protein>
<proteinExistence type="inferred from homology"/>
<reference key="1">
    <citation type="submission" date="2007-06" db="EMBL/GenBank/DDBJ databases">
        <title>Complete sequence of Methanococcus vannielii SB.</title>
        <authorList>
            <consortium name="US DOE Joint Genome Institute"/>
            <person name="Copeland A."/>
            <person name="Lucas S."/>
            <person name="Lapidus A."/>
            <person name="Barry K."/>
            <person name="Glavina del Rio T."/>
            <person name="Dalin E."/>
            <person name="Tice H."/>
            <person name="Pitluck S."/>
            <person name="Chain P."/>
            <person name="Malfatti S."/>
            <person name="Shin M."/>
            <person name="Vergez L."/>
            <person name="Schmutz J."/>
            <person name="Larimer F."/>
            <person name="Land M."/>
            <person name="Hauser L."/>
            <person name="Kyrpides N."/>
            <person name="Anderson I."/>
            <person name="Sieprawska-Lupa M."/>
            <person name="Whitman W.B."/>
            <person name="Richardson P."/>
        </authorList>
    </citation>
    <scope>NUCLEOTIDE SEQUENCE [LARGE SCALE GENOMIC DNA]</scope>
    <source>
        <strain>ATCC 35089 / DSM 1224 / JCM 13029 / OCM 148 / SB</strain>
    </source>
</reference>
<evidence type="ECO:0000255" key="1">
    <source>
        <dbReference type="HAMAP-Rule" id="MF_00674"/>
    </source>
</evidence>